<keyword id="KW-0217">Developmental protein</keyword>
<keyword id="KW-0221">Differentiation</keyword>
<keyword id="KW-0287">Flowering</keyword>
<keyword id="KW-0479">Metal-binding</keyword>
<keyword id="KW-0539">Nucleus</keyword>
<keyword id="KW-1185">Reference proteome</keyword>
<keyword id="KW-0678">Repressor</keyword>
<keyword id="KW-0804">Transcription</keyword>
<keyword id="KW-0805">Transcription regulation</keyword>
<keyword id="KW-0862">Zinc</keyword>
<keyword id="KW-0863">Zinc-finger</keyword>
<sequence length="226" mass="25338">MMDRGECLMSMKLRPMVTRPSSDGTLFWPFREERAFASAEEYGGGGGCMWPPRSYSCSFCGREFKSAQALGGHMNVHRRDRARLKQQSLSPSSTDQATPPECDRQQQVLDVGSKVLVQEETRKPNGTKREISDVCNNNVLESSMKRYEHDNGEVKTDLSVGLLSTEFDPRKKQLINGSSSSWKRAKTDVSRFPMMLGLVIGISEINGHHEELDLELRLGADPPKVN</sequence>
<organism>
    <name type="scientific">Arabidopsis thaliana</name>
    <name type="common">Mouse-ear cress</name>
    <dbReference type="NCBI Taxonomy" id="3702"/>
    <lineage>
        <taxon>Eukaryota</taxon>
        <taxon>Viridiplantae</taxon>
        <taxon>Streptophyta</taxon>
        <taxon>Embryophyta</taxon>
        <taxon>Tracheophyta</taxon>
        <taxon>Spermatophyta</taxon>
        <taxon>Magnoliopsida</taxon>
        <taxon>eudicotyledons</taxon>
        <taxon>Gunneridae</taxon>
        <taxon>Pentapetalae</taxon>
        <taxon>rosids</taxon>
        <taxon>malvids</taxon>
        <taxon>Brassicales</taxon>
        <taxon>Brassicaceae</taxon>
        <taxon>Camelineae</taxon>
        <taxon>Arabidopsis</taxon>
    </lineage>
</organism>
<gene>
    <name type="primary">RBE</name>
    <name type="ordered locus">At5g06070</name>
    <name type="ORF">K16F4.3</name>
</gene>
<evidence type="ECO:0000255" key="1">
    <source>
        <dbReference type="PROSITE-ProRule" id="PRU00042"/>
    </source>
</evidence>
<evidence type="ECO:0000256" key="2">
    <source>
        <dbReference type="SAM" id="MobiDB-lite"/>
    </source>
</evidence>
<evidence type="ECO:0000269" key="3">
    <source>
    </source>
</evidence>
<evidence type="ECO:0000305" key="4"/>
<dbReference type="EMBL" id="AB107371">
    <property type="protein sequence ID" value="BAC98433.1"/>
    <property type="molecule type" value="mRNA"/>
</dbReference>
<dbReference type="EMBL" id="AP002030">
    <property type="protein sequence ID" value="BAA98196.1"/>
    <property type="status" value="ALT_INIT"/>
    <property type="molecule type" value="Genomic_DNA"/>
</dbReference>
<dbReference type="EMBL" id="CP002688">
    <property type="protein sequence ID" value="AED90961.1"/>
    <property type="molecule type" value="Genomic_DNA"/>
</dbReference>
<dbReference type="EMBL" id="AY088861">
    <property type="protein sequence ID" value="AAM67167.1"/>
    <property type="status" value="ALT_INIT"/>
    <property type="molecule type" value="mRNA"/>
</dbReference>
<dbReference type="RefSeq" id="NP_568161.1">
    <property type="nucleotide sequence ID" value="NM_120689.2"/>
</dbReference>
<dbReference type="SMR" id="Q9LHS9"/>
<dbReference type="BioGRID" id="15773">
    <property type="interactions" value="4"/>
</dbReference>
<dbReference type="IntAct" id="Q9LHS9">
    <property type="interactions" value="4"/>
</dbReference>
<dbReference type="STRING" id="3702.Q9LHS9"/>
<dbReference type="PaxDb" id="3702-AT5G06070.1"/>
<dbReference type="ProteomicsDB" id="236990"/>
<dbReference type="EnsemblPlants" id="AT5G06070.1">
    <property type="protein sequence ID" value="AT5G06070.1"/>
    <property type="gene ID" value="AT5G06070"/>
</dbReference>
<dbReference type="GeneID" id="830494"/>
<dbReference type="Gramene" id="AT5G06070.1">
    <property type="protein sequence ID" value="AT5G06070.1"/>
    <property type="gene ID" value="AT5G06070"/>
</dbReference>
<dbReference type="KEGG" id="ath:AT5G06070"/>
<dbReference type="Araport" id="AT5G06070"/>
<dbReference type="TAIR" id="AT5G06070">
    <property type="gene designation" value="RBE"/>
</dbReference>
<dbReference type="eggNOG" id="ENOG502QUGK">
    <property type="taxonomic scope" value="Eukaryota"/>
</dbReference>
<dbReference type="HOGENOM" id="CLU_068782_0_2_1"/>
<dbReference type="InParanoid" id="Q9LHS9"/>
<dbReference type="OMA" id="FWPFREE"/>
<dbReference type="OrthoDB" id="1708403at2759"/>
<dbReference type="PhylomeDB" id="Q9LHS9"/>
<dbReference type="PRO" id="PR:Q9LHS9"/>
<dbReference type="Proteomes" id="UP000006548">
    <property type="component" value="Chromosome 5"/>
</dbReference>
<dbReference type="ExpressionAtlas" id="Q9LHS9">
    <property type="expression patterns" value="baseline and differential"/>
</dbReference>
<dbReference type="GO" id="GO:0005634">
    <property type="term" value="C:nucleus"/>
    <property type="evidence" value="ECO:0000314"/>
    <property type="project" value="TAIR"/>
</dbReference>
<dbReference type="GO" id="GO:0003700">
    <property type="term" value="F:DNA-binding transcription factor activity"/>
    <property type="evidence" value="ECO:0000250"/>
    <property type="project" value="TAIR"/>
</dbReference>
<dbReference type="GO" id="GO:0008270">
    <property type="term" value="F:zinc ion binding"/>
    <property type="evidence" value="ECO:0007669"/>
    <property type="project" value="UniProtKB-KW"/>
</dbReference>
<dbReference type="GO" id="GO:0030154">
    <property type="term" value="P:cell differentiation"/>
    <property type="evidence" value="ECO:0007669"/>
    <property type="project" value="UniProtKB-KW"/>
</dbReference>
<dbReference type="GO" id="GO:0048441">
    <property type="term" value="P:petal development"/>
    <property type="evidence" value="ECO:0000315"/>
    <property type="project" value="TAIR"/>
</dbReference>
<dbReference type="GO" id="GO:0006355">
    <property type="term" value="P:regulation of DNA-templated transcription"/>
    <property type="evidence" value="ECO:0000304"/>
    <property type="project" value="TAIR"/>
</dbReference>
<dbReference type="GO" id="GO:0009409">
    <property type="term" value="P:response to cold"/>
    <property type="evidence" value="ECO:0000270"/>
    <property type="project" value="TAIR"/>
</dbReference>
<dbReference type="Gene3D" id="3.30.160.60">
    <property type="entry name" value="Classic Zinc Finger"/>
    <property type="match status" value="1"/>
</dbReference>
<dbReference type="InterPro" id="IPR052426">
    <property type="entry name" value="Plant_dev_regulator"/>
</dbReference>
<dbReference type="InterPro" id="IPR036236">
    <property type="entry name" value="Znf_C2H2_sf"/>
</dbReference>
<dbReference type="InterPro" id="IPR013087">
    <property type="entry name" value="Znf_C2H2_type"/>
</dbReference>
<dbReference type="PANTHER" id="PTHR45801">
    <property type="entry name" value="OS07G0101800 PROTEIN"/>
    <property type="match status" value="1"/>
</dbReference>
<dbReference type="PANTHER" id="PTHR45801:SF113">
    <property type="entry name" value="TRANSCRIPTIONAL REGULATOR RABBIT EARS-RELATED"/>
    <property type="match status" value="1"/>
</dbReference>
<dbReference type="Pfam" id="PF13912">
    <property type="entry name" value="zf-C2H2_6"/>
    <property type="match status" value="1"/>
</dbReference>
<dbReference type="SMART" id="SM00355">
    <property type="entry name" value="ZnF_C2H2"/>
    <property type="match status" value="1"/>
</dbReference>
<dbReference type="SUPFAM" id="SSF57667">
    <property type="entry name" value="beta-beta-alpha zinc fingers"/>
    <property type="match status" value="1"/>
</dbReference>
<dbReference type="PROSITE" id="PS00028">
    <property type="entry name" value="ZINC_FINGER_C2H2_1"/>
    <property type="match status" value="1"/>
</dbReference>
<dbReference type="PROSITE" id="PS50157">
    <property type="entry name" value="ZINC_FINGER_C2H2_2"/>
    <property type="match status" value="1"/>
</dbReference>
<accession>Q9LHS9</accession>
<name>RBE_ARATH</name>
<protein>
    <recommendedName>
        <fullName>Probable transcriptional regulator RABBIT EARS</fullName>
    </recommendedName>
</protein>
<feature type="chain" id="PRO_0000047838" description="Probable transcriptional regulator RABBIT EARS">
    <location>
        <begin position="1"/>
        <end position="226"/>
    </location>
</feature>
<feature type="zinc finger region" description="C2H2-type" evidence="1">
    <location>
        <begin position="55"/>
        <end position="77"/>
    </location>
</feature>
<feature type="region of interest" description="Disordered" evidence="2">
    <location>
        <begin position="80"/>
        <end position="102"/>
    </location>
</feature>
<feature type="short sequence motif" description="EAR-like (transcriptional repression)">
    <location>
        <begin position="212"/>
        <end position="216"/>
    </location>
</feature>
<feature type="compositionally biased region" description="Polar residues" evidence="2">
    <location>
        <begin position="85"/>
        <end position="97"/>
    </location>
</feature>
<reference key="1">
    <citation type="journal article" date="2004" name="Development">
        <title>RABBIT EARS, encoding a SUPERMAN-like zinc finger protein, regulates petal development in Arabidopsis thaliana.</title>
        <authorList>
            <person name="Takeda S."/>
            <person name="Matsumoto N."/>
            <person name="Okada K."/>
        </authorList>
    </citation>
    <scope>NUCLEOTIDE SEQUENCE [MRNA]</scope>
    <scope>FUNCTION</scope>
    <scope>SUBCELLULAR LOCATION</scope>
    <scope>TISSUE SPECIFICITY</scope>
    <scope>DEVELOPMENTAL STAGE</scope>
</reference>
<reference key="2">
    <citation type="submission" date="2000-05" db="EMBL/GenBank/DDBJ databases">
        <title>Structural analysis of Arabidopsis thaliana chromosome 5. XI.</title>
        <authorList>
            <person name="Kaneko T."/>
            <person name="Katoh T."/>
            <person name="Asamizu E."/>
            <person name="Sato S."/>
            <person name="Nakamura Y."/>
            <person name="Kotani H."/>
            <person name="Tabata S."/>
        </authorList>
    </citation>
    <scope>NUCLEOTIDE SEQUENCE [LARGE SCALE GENOMIC DNA]</scope>
    <source>
        <strain>cv. Columbia</strain>
    </source>
</reference>
<reference key="3">
    <citation type="journal article" date="2017" name="Plant J.">
        <title>Araport11: a complete reannotation of the Arabidopsis thaliana reference genome.</title>
        <authorList>
            <person name="Cheng C.Y."/>
            <person name="Krishnakumar V."/>
            <person name="Chan A.P."/>
            <person name="Thibaud-Nissen F."/>
            <person name="Schobel S."/>
            <person name="Town C.D."/>
        </authorList>
    </citation>
    <scope>GENOME REANNOTATION</scope>
    <source>
        <strain>cv. Columbia</strain>
    </source>
</reference>
<reference key="4">
    <citation type="submission" date="2002-03" db="EMBL/GenBank/DDBJ databases">
        <title>Full-length cDNA from Arabidopsis thaliana.</title>
        <authorList>
            <person name="Brover V.V."/>
            <person name="Troukhan M.E."/>
            <person name="Alexandrov N.A."/>
            <person name="Lu Y.-P."/>
            <person name="Flavell R.B."/>
            <person name="Feldmann K.A."/>
        </authorList>
    </citation>
    <scope>NUCLEOTIDE SEQUENCE [LARGE SCALE MRNA]</scope>
</reference>
<comment type="function">
    <text evidence="3">Probable transcriptional regulator essential for petal development. Required for the early development of the organ primordia of the second whorl. Acts downstream of AP1 and PTL.</text>
</comment>
<comment type="subcellular location">
    <subcellularLocation>
        <location evidence="3">Nucleus</location>
    </subcellularLocation>
</comment>
<comment type="tissue specificity">
    <text evidence="3">Strongly expressed in inflorescences and flowers, and weakly in siliques, seedlings and roots. In flowers, it is expressed in petal primordia and their precursor cells. Also expressed in the lateral root caps and the basal cells of lateral roots.</text>
</comment>
<comment type="developmental stage">
    <text evidence="3">Not expressed in the inflorescence meristem or in the flowers at stages 1 and 2. First expressed in the precursor cells of petal primordia in stage 3 flowers and in the developing petal primordia up to stage 6. Not expressed at later stages.</text>
</comment>
<comment type="domain">
    <text>Contains a slightly degenerated ERF-associated amphiphilic repression (EAR) motif, which may be involved in the activity of transcriptional repression.</text>
</comment>
<comment type="sequence caution" evidence="4">
    <conflict type="erroneous initiation">
        <sequence resource="EMBL-CDS" id="AAM67167"/>
    </conflict>
</comment>
<comment type="sequence caution" evidence="4">
    <conflict type="erroneous initiation">
        <sequence resource="EMBL-CDS" id="BAA98196"/>
    </conflict>
</comment>
<proteinExistence type="evidence at transcript level"/>